<name>FABG_HAEIN</name>
<gene>
    <name type="primary">fabG</name>
    <name type="ordered locus">HI_0155</name>
</gene>
<keyword id="KW-0275">Fatty acid biosynthesis</keyword>
<keyword id="KW-0276">Fatty acid metabolism</keyword>
<keyword id="KW-0444">Lipid biosynthesis</keyword>
<keyword id="KW-0443">Lipid metabolism</keyword>
<keyword id="KW-0521">NADP</keyword>
<keyword id="KW-0560">Oxidoreductase</keyword>
<keyword id="KW-1185">Reference proteome</keyword>
<dbReference type="EC" id="1.1.1.100"/>
<dbReference type="EMBL" id="L42023">
    <property type="protein sequence ID" value="AAC21824.1"/>
    <property type="molecule type" value="Genomic_DNA"/>
</dbReference>
<dbReference type="PIR" id="D64051">
    <property type="entry name" value="D64051"/>
</dbReference>
<dbReference type="RefSeq" id="NP_438325.1">
    <property type="nucleotide sequence ID" value="NC_000907.1"/>
</dbReference>
<dbReference type="SMR" id="P43713"/>
<dbReference type="STRING" id="71421.HI_0155"/>
<dbReference type="EnsemblBacteria" id="AAC21824">
    <property type="protein sequence ID" value="AAC21824"/>
    <property type="gene ID" value="HI_0155"/>
</dbReference>
<dbReference type="KEGG" id="hin:HI_0155"/>
<dbReference type="PATRIC" id="fig|71421.8.peg.159"/>
<dbReference type="eggNOG" id="COG1028">
    <property type="taxonomic scope" value="Bacteria"/>
</dbReference>
<dbReference type="HOGENOM" id="CLU_010194_1_3_6"/>
<dbReference type="OrthoDB" id="9804774at2"/>
<dbReference type="PhylomeDB" id="P43713"/>
<dbReference type="BioCyc" id="HINF71421:G1GJ1-167-MONOMER"/>
<dbReference type="UniPathway" id="UPA00094"/>
<dbReference type="Proteomes" id="UP000000579">
    <property type="component" value="Chromosome"/>
</dbReference>
<dbReference type="GO" id="GO:0004316">
    <property type="term" value="F:3-oxoacyl-[acyl-carrier-protein] reductase (NADPH) activity"/>
    <property type="evidence" value="ECO:0000250"/>
    <property type="project" value="UniProtKB"/>
</dbReference>
<dbReference type="GO" id="GO:0051287">
    <property type="term" value="F:NAD binding"/>
    <property type="evidence" value="ECO:0007669"/>
    <property type="project" value="InterPro"/>
</dbReference>
<dbReference type="GO" id="GO:0050661">
    <property type="term" value="F:NADP binding"/>
    <property type="evidence" value="ECO:0000250"/>
    <property type="project" value="UniProtKB"/>
</dbReference>
<dbReference type="GO" id="GO:0016616">
    <property type="term" value="F:oxidoreductase activity, acting on the CH-OH group of donors, NAD or NADP as acceptor"/>
    <property type="evidence" value="ECO:0000318"/>
    <property type="project" value="GO_Central"/>
</dbReference>
<dbReference type="GO" id="GO:0030497">
    <property type="term" value="P:fatty acid elongation"/>
    <property type="evidence" value="ECO:0000250"/>
    <property type="project" value="UniProtKB"/>
</dbReference>
<dbReference type="CDD" id="cd05333">
    <property type="entry name" value="BKR_SDR_c"/>
    <property type="match status" value="1"/>
</dbReference>
<dbReference type="FunFam" id="3.40.50.720:FF:000037">
    <property type="entry name" value="3-oxoacyl-[acyl-carrier-protein] reductase FabG"/>
    <property type="match status" value="1"/>
</dbReference>
<dbReference type="Gene3D" id="3.40.50.720">
    <property type="entry name" value="NAD(P)-binding Rossmann-like Domain"/>
    <property type="match status" value="1"/>
</dbReference>
<dbReference type="InterPro" id="IPR011284">
    <property type="entry name" value="3oxo_ACP_reduc"/>
</dbReference>
<dbReference type="InterPro" id="IPR036291">
    <property type="entry name" value="NAD(P)-bd_dom_sf"/>
</dbReference>
<dbReference type="InterPro" id="IPR020904">
    <property type="entry name" value="Sc_DH/Rdtase_CS"/>
</dbReference>
<dbReference type="InterPro" id="IPR050259">
    <property type="entry name" value="SDR"/>
</dbReference>
<dbReference type="InterPro" id="IPR002347">
    <property type="entry name" value="SDR_fam"/>
</dbReference>
<dbReference type="NCBIfam" id="TIGR01830">
    <property type="entry name" value="3oxo_ACP_reduc"/>
    <property type="match status" value="1"/>
</dbReference>
<dbReference type="NCBIfam" id="NF004197">
    <property type="entry name" value="PRK05653.1-1"/>
    <property type="match status" value="1"/>
</dbReference>
<dbReference type="NCBIfam" id="NF005559">
    <property type="entry name" value="PRK07231.1"/>
    <property type="match status" value="1"/>
</dbReference>
<dbReference type="NCBIfam" id="NF009464">
    <property type="entry name" value="PRK12824.1"/>
    <property type="match status" value="1"/>
</dbReference>
<dbReference type="NCBIfam" id="NF009466">
    <property type="entry name" value="PRK12826.1-2"/>
    <property type="match status" value="1"/>
</dbReference>
<dbReference type="PANTHER" id="PTHR42879">
    <property type="entry name" value="3-OXOACYL-(ACYL-CARRIER-PROTEIN) REDUCTASE"/>
    <property type="match status" value="1"/>
</dbReference>
<dbReference type="PANTHER" id="PTHR42879:SF2">
    <property type="entry name" value="3-OXOACYL-[ACYL-CARRIER-PROTEIN] REDUCTASE FABG"/>
    <property type="match status" value="1"/>
</dbReference>
<dbReference type="Pfam" id="PF13561">
    <property type="entry name" value="adh_short_C2"/>
    <property type="match status" value="1"/>
</dbReference>
<dbReference type="PRINTS" id="PR00081">
    <property type="entry name" value="GDHRDH"/>
</dbReference>
<dbReference type="PRINTS" id="PR00080">
    <property type="entry name" value="SDRFAMILY"/>
</dbReference>
<dbReference type="SMART" id="SM00822">
    <property type="entry name" value="PKS_KR"/>
    <property type="match status" value="1"/>
</dbReference>
<dbReference type="SUPFAM" id="SSF51735">
    <property type="entry name" value="NAD(P)-binding Rossmann-fold domains"/>
    <property type="match status" value="1"/>
</dbReference>
<dbReference type="PROSITE" id="PS00061">
    <property type="entry name" value="ADH_SHORT"/>
    <property type="match status" value="1"/>
</dbReference>
<protein>
    <recommendedName>
        <fullName>3-oxoacyl-[acyl-carrier-protein] reductase FabG</fullName>
        <ecNumber>1.1.1.100</ecNumber>
    </recommendedName>
    <alternativeName>
        <fullName>3-ketoacyl-acyl carrier protein reductase</fullName>
    </alternativeName>
    <alternativeName>
        <fullName>Beta-Ketoacyl-acyl carrier protein reductase</fullName>
    </alternativeName>
    <alternativeName>
        <fullName>Beta-ketoacyl-ACP reductase</fullName>
    </alternativeName>
</protein>
<reference key="1">
    <citation type="journal article" date="1995" name="Science">
        <title>Whole-genome random sequencing and assembly of Haemophilus influenzae Rd.</title>
        <authorList>
            <person name="Fleischmann R.D."/>
            <person name="Adams M.D."/>
            <person name="White O."/>
            <person name="Clayton R.A."/>
            <person name="Kirkness E.F."/>
            <person name="Kerlavage A.R."/>
            <person name="Bult C.J."/>
            <person name="Tomb J.-F."/>
            <person name="Dougherty B.A."/>
            <person name="Merrick J.M."/>
            <person name="McKenney K."/>
            <person name="Sutton G.G."/>
            <person name="FitzHugh W."/>
            <person name="Fields C.A."/>
            <person name="Gocayne J.D."/>
            <person name="Scott J.D."/>
            <person name="Shirley R."/>
            <person name="Liu L.-I."/>
            <person name="Glodek A."/>
            <person name="Kelley J.M."/>
            <person name="Weidman J.F."/>
            <person name="Phillips C.A."/>
            <person name="Spriggs T."/>
            <person name="Hedblom E."/>
            <person name="Cotton M.D."/>
            <person name="Utterback T.R."/>
            <person name="Hanna M.C."/>
            <person name="Nguyen D.T."/>
            <person name="Saudek D.M."/>
            <person name="Brandon R.C."/>
            <person name="Fine L.D."/>
            <person name="Fritchman J.L."/>
            <person name="Fuhrmann J.L."/>
            <person name="Geoghagen N.S.M."/>
            <person name="Gnehm C.L."/>
            <person name="McDonald L.A."/>
            <person name="Small K.V."/>
            <person name="Fraser C.M."/>
            <person name="Smith H.O."/>
            <person name="Venter J.C."/>
        </authorList>
    </citation>
    <scope>NUCLEOTIDE SEQUENCE [LARGE SCALE GENOMIC DNA]</scope>
    <source>
        <strain>ATCC 51907 / DSM 11121 / KW20 / Rd</strain>
    </source>
</reference>
<organism>
    <name type="scientific">Haemophilus influenzae (strain ATCC 51907 / DSM 11121 / KW20 / Rd)</name>
    <dbReference type="NCBI Taxonomy" id="71421"/>
    <lineage>
        <taxon>Bacteria</taxon>
        <taxon>Pseudomonadati</taxon>
        <taxon>Pseudomonadota</taxon>
        <taxon>Gammaproteobacteria</taxon>
        <taxon>Pasteurellales</taxon>
        <taxon>Pasteurellaceae</taxon>
        <taxon>Haemophilus</taxon>
    </lineage>
</organism>
<sequence length="242" mass="25507">MQGKIALVTGSTRGIGRAIAEELSSKGAFVIGTATSEKGAEAISAYLGDKGKGLVLNVTDKESIETLLEQIKNDFGDIDILVNNAGITRDNLLMRMKDEEWFDIMQTNLTSVYHLSKAMLRSMMKKRFGRIINIGSVVGSTGNPGQTNYCAAKAGVVGFSKSLAKEVAARGITVNVVAPGFIATDMTEVLTDEQKAGILSNVPAGRLGEAKDIAKAVAFLASDDAGYITGTTLHVNGGLYLS</sequence>
<comment type="function">
    <text evidence="1">Catalyzes the NADPH-dependent reduction of beta-ketoacyl-ACP substrates to beta-hydroxyacyl-ACP products, the first reductive step in the elongation cycle of fatty acid biosynthesis.</text>
</comment>
<comment type="catalytic activity">
    <reaction>
        <text>a (3R)-hydroxyacyl-[ACP] + NADP(+) = a 3-oxoacyl-[ACP] + NADPH + H(+)</text>
        <dbReference type="Rhea" id="RHEA:17397"/>
        <dbReference type="Rhea" id="RHEA-COMP:9916"/>
        <dbReference type="Rhea" id="RHEA-COMP:9945"/>
        <dbReference type="ChEBI" id="CHEBI:15378"/>
        <dbReference type="ChEBI" id="CHEBI:57783"/>
        <dbReference type="ChEBI" id="CHEBI:58349"/>
        <dbReference type="ChEBI" id="CHEBI:78776"/>
        <dbReference type="ChEBI" id="CHEBI:78827"/>
        <dbReference type="EC" id="1.1.1.100"/>
    </reaction>
</comment>
<comment type="pathway">
    <text>Lipid metabolism; fatty acid biosynthesis.</text>
</comment>
<comment type="subunit">
    <text evidence="1">Homotetramer.</text>
</comment>
<comment type="similarity">
    <text evidence="3">Belongs to the short-chain dehydrogenases/reductases (SDR) family.</text>
</comment>
<evidence type="ECO:0000250" key="1"/>
<evidence type="ECO:0000255" key="2">
    <source>
        <dbReference type="PROSITE-ProRule" id="PRU10001"/>
    </source>
</evidence>
<evidence type="ECO:0000305" key="3"/>
<proteinExistence type="inferred from homology"/>
<feature type="chain" id="PRO_0000054673" description="3-oxoacyl-[acyl-carrier-protein] reductase FabG">
    <location>
        <begin position="1"/>
        <end position="242"/>
    </location>
</feature>
<feature type="active site" description="Proton acceptor" evidence="2">
    <location>
        <position position="149"/>
    </location>
</feature>
<feature type="binding site" evidence="1">
    <location>
        <begin position="10"/>
        <end position="13"/>
    </location>
    <ligand>
        <name>NADP(+)</name>
        <dbReference type="ChEBI" id="CHEBI:58349"/>
    </ligand>
</feature>
<feature type="binding site" evidence="1">
    <location>
        <position position="35"/>
    </location>
    <ligand>
        <name>NADP(+)</name>
        <dbReference type="ChEBI" id="CHEBI:58349"/>
    </ligand>
</feature>
<feature type="binding site" evidence="1">
    <location>
        <begin position="57"/>
        <end position="58"/>
    </location>
    <ligand>
        <name>NADP(+)</name>
        <dbReference type="ChEBI" id="CHEBI:58349"/>
    </ligand>
</feature>
<feature type="binding site" evidence="1">
    <location>
        <position position="84"/>
    </location>
    <ligand>
        <name>NADP(+)</name>
        <dbReference type="ChEBI" id="CHEBI:58349"/>
    </ligand>
</feature>
<feature type="binding site" evidence="1">
    <location>
        <position position="136"/>
    </location>
    <ligand>
        <name>substrate</name>
    </ligand>
</feature>
<feature type="binding site" evidence="1">
    <location>
        <begin position="149"/>
        <end position="153"/>
    </location>
    <ligand>
        <name>NADP(+)</name>
        <dbReference type="ChEBI" id="CHEBI:58349"/>
    </ligand>
</feature>
<feature type="binding site" evidence="1">
    <location>
        <position position="182"/>
    </location>
    <ligand>
        <name>NADP(+)</name>
        <dbReference type="ChEBI" id="CHEBI:58349"/>
    </ligand>
</feature>
<accession>P43713</accession>